<name>FDXN_RHOCB</name>
<gene>
    <name type="primary">fdxN</name>
    <name type="ordered locus">RCAP_rcc03284</name>
</gene>
<protein>
    <recommendedName>
        <fullName>Ferredoxin-1</fullName>
    </recommendedName>
    <alternativeName>
        <fullName>Ferredoxin I</fullName>
        <shortName>FdI</shortName>
    </alternativeName>
</protein>
<comment type="function">
    <text>Ferredoxins are iron-sulfur proteins that transfer electrons in a wide variety of metabolic reactions. This ferredoxin probably participates in nitrogen fixation.</text>
</comment>
<comment type="cofactor">
    <cofactor evidence="4">
        <name>[4Fe-4S] cluster</name>
        <dbReference type="ChEBI" id="CHEBI:49883"/>
    </cofactor>
    <text evidence="4">Binds 2 [4Fe-4S] clusters.</text>
</comment>
<keyword id="KW-0004">4Fe-4S</keyword>
<keyword id="KW-0903">Direct protein sequencing</keyword>
<keyword id="KW-0249">Electron transport</keyword>
<keyword id="KW-0408">Iron</keyword>
<keyword id="KW-0411">Iron-sulfur</keyword>
<keyword id="KW-0479">Metal-binding</keyword>
<keyword id="KW-0535">Nitrogen fixation</keyword>
<keyword id="KW-1185">Reference proteome</keyword>
<keyword id="KW-0677">Repeat</keyword>
<keyword id="KW-0813">Transport</keyword>
<evidence type="ECO:0000250" key="1"/>
<evidence type="ECO:0000255" key="2">
    <source>
        <dbReference type="PROSITE-ProRule" id="PRU00711"/>
    </source>
</evidence>
<evidence type="ECO:0000269" key="3">
    <source>
    </source>
</evidence>
<evidence type="ECO:0000305" key="4"/>
<accession>D5ARY6</accession>
<accession>P16021</accession>
<organism>
    <name type="scientific">Rhodobacter capsulatus (strain ATCC BAA-309 / NBRC 16581 / SB1003)</name>
    <dbReference type="NCBI Taxonomy" id="272942"/>
    <lineage>
        <taxon>Bacteria</taxon>
        <taxon>Pseudomonadati</taxon>
        <taxon>Pseudomonadota</taxon>
        <taxon>Alphaproteobacteria</taxon>
        <taxon>Rhodobacterales</taxon>
        <taxon>Rhodobacter group</taxon>
        <taxon>Rhodobacter</taxon>
    </lineage>
</organism>
<reference key="1">
    <citation type="journal article" date="1990" name="Nucleic Acids Res.">
        <title>A plant-ferredoxin-like gene is located upstream of ferredoxin I gene (fdxN) of Rhodobacter capsulatus.</title>
        <authorList>
            <person name="Saeki K."/>
            <person name="Miyatake Y."/>
            <person name="Young D.A."/>
            <person name="Marrs B."/>
            <person name="Matsubara H."/>
        </authorList>
    </citation>
    <scope>NUCLEOTIDE SEQUENCE [GENOMIC DNA]</scope>
    <source>
        <strain>ATCC BAA-309 / NBRC 16581 / SB1003</strain>
    </source>
</reference>
<reference key="2">
    <citation type="journal article" date="2010" name="J. Bacteriol.">
        <title>Complete genome sequence of the photosynthetic purple nonsulfur bacterium Rhodobacter capsulatus SB 1003.</title>
        <authorList>
            <person name="Strnad H."/>
            <person name="Lapidus A."/>
            <person name="Paces J."/>
            <person name="Ulbrich P."/>
            <person name="Vlcek C."/>
            <person name="Paces V."/>
            <person name="Haselkorn R."/>
        </authorList>
    </citation>
    <scope>NUCLEOTIDE SEQUENCE [LARGE SCALE GENOMIC DNA]</scope>
    <source>
        <strain>ATCC BAA-309 / NBRC 16581 / SB1003</strain>
    </source>
</reference>
<reference key="3">
    <citation type="journal article" date="1990" name="J. Biochem.">
        <title>Two distinct ferredoxins from Rhodobacter capsulatus: complete amino acid sequences and molecular evolution.</title>
        <authorList>
            <person name="Saeki K."/>
            <person name="Suetsugu Y."/>
            <person name="Yao Y."/>
            <person name="Horio T."/>
            <person name="Marrs B.L."/>
            <person name="Matsubara H."/>
        </authorList>
    </citation>
    <scope>PROTEIN SEQUENCE OF 2-65</scope>
    <source>
        <strain>ATCC BAA-309 / NBRC 16581 / SB1003</strain>
    </source>
</reference>
<dbReference type="EMBL" id="X51316">
    <property type="protein sequence ID" value="CAA35699.1"/>
    <property type="molecule type" value="Genomic_DNA"/>
</dbReference>
<dbReference type="EMBL" id="CP001312">
    <property type="protein sequence ID" value="ADE87008.1"/>
    <property type="molecule type" value="Genomic_DNA"/>
</dbReference>
<dbReference type="PIR" id="A33498">
    <property type="entry name" value="FERF1C"/>
</dbReference>
<dbReference type="RefSeq" id="WP_013068980.1">
    <property type="nucleotide sequence ID" value="NC_014034.1"/>
</dbReference>
<dbReference type="SMR" id="D5ARY6"/>
<dbReference type="STRING" id="272942.RCAP_rcc03284"/>
<dbReference type="GeneID" id="31492064"/>
<dbReference type="KEGG" id="rcp:RCAP_rcc03284"/>
<dbReference type="eggNOG" id="COG1145">
    <property type="taxonomic scope" value="Bacteria"/>
</dbReference>
<dbReference type="HOGENOM" id="CLU_139698_11_0_5"/>
<dbReference type="OrthoDB" id="9803397at2"/>
<dbReference type="Proteomes" id="UP000002361">
    <property type="component" value="Chromosome"/>
</dbReference>
<dbReference type="GO" id="GO:0051539">
    <property type="term" value="F:4 iron, 4 sulfur cluster binding"/>
    <property type="evidence" value="ECO:0007669"/>
    <property type="project" value="UniProtKB-KW"/>
</dbReference>
<dbReference type="GO" id="GO:0046872">
    <property type="term" value="F:metal ion binding"/>
    <property type="evidence" value="ECO:0007669"/>
    <property type="project" value="UniProtKB-KW"/>
</dbReference>
<dbReference type="GO" id="GO:0009399">
    <property type="term" value="P:nitrogen fixation"/>
    <property type="evidence" value="ECO:0007669"/>
    <property type="project" value="UniProtKB-KW"/>
</dbReference>
<dbReference type="Gene3D" id="3.30.70.20">
    <property type="match status" value="1"/>
</dbReference>
<dbReference type="InterPro" id="IPR017896">
    <property type="entry name" value="4Fe4S_Fe-S-bd"/>
</dbReference>
<dbReference type="InterPro" id="IPR017900">
    <property type="entry name" value="4Fe4S_Fe_S_CS"/>
</dbReference>
<dbReference type="Pfam" id="PF00037">
    <property type="entry name" value="Fer4"/>
    <property type="match status" value="1"/>
</dbReference>
<dbReference type="SUPFAM" id="SSF54862">
    <property type="entry name" value="4Fe-4S ferredoxins"/>
    <property type="match status" value="1"/>
</dbReference>
<dbReference type="PROSITE" id="PS00198">
    <property type="entry name" value="4FE4S_FER_1"/>
    <property type="match status" value="1"/>
</dbReference>
<dbReference type="PROSITE" id="PS51379">
    <property type="entry name" value="4FE4S_FER_2"/>
    <property type="match status" value="1"/>
</dbReference>
<feature type="initiator methionine" description="Removed" evidence="3">
    <location>
        <position position="1"/>
    </location>
</feature>
<feature type="chain" id="PRO_0000410435" description="Ferredoxin-1">
    <location>
        <begin position="2"/>
        <end position="65"/>
    </location>
</feature>
<feature type="domain" description="4Fe-4S ferredoxin-type" evidence="2">
    <location>
        <begin position="2"/>
        <end position="30"/>
    </location>
</feature>
<feature type="binding site" evidence="1">
    <location>
        <position position="10"/>
    </location>
    <ligand>
        <name>[4Fe-4S] cluster</name>
        <dbReference type="ChEBI" id="CHEBI:49883"/>
        <label>1</label>
    </ligand>
</feature>
<feature type="binding site" evidence="1">
    <location>
        <position position="13"/>
    </location>
    <ligand>
        <name>[4Fe-4S] cluster</name>
        <dbReference type="ChEBI" id="CHEBI:49883"/>
        <label>1</label>
    </ligand>
</feature>
<feature type="binding site" evidence="1">
    <location>
        <position position="16"/>
    </location>
    <ligand>
        <name>[4Fe-4S] cluster</name>
        <dbReference type="ChEBI" id="CHEBI:49883"/>
        <label>1</label>
    </ligand>
</feature>
<feature type="binding site" evidence="1">
    <location>
        <position position="20"/>
    </location>
    <ligand>
        <name>[4Fe-4S] cluster</name>
        <dbReference type="ChEBI" id="CHEBI:49883"/>
        <label>2</label>
    </ligand>
</feature>
<feature type="binding site" evidence="1">
    <location>
        <position position="39"/>
    </location>
    <ligand>
        <name>[4Fe-4S] cluster</name>
        <dbReference type="ChEBI" id="CHEBI:49883"/>
        <label>2</label>
    </ligand>
</feature>
<feature type="binding site" evidence="1">
    <location>
        <position position="42"/>
    </location>
    <ligand>
        <name>[4Fe-4S] cluster</name>
        <dbReference type="ChEBI" id="CHEBI:49883"/>
        <label>2</label>
    </ligand>
</feature>
<feature type="binding site" evidence="1">
    <location>
        <position position="51"/>
    </location>
    <ligand>
        <name>[4Fe-4S] cluster</name>
        <dbReference type="ChEBI" id="CHEBI:49883"/>
        <label>2</label>
    </ligand>
</feature>
<feature type="binding site" evidence="1">
    <location>
        <position position="55"/>
    </location>
    <ligand>
        <name>[4Fe-4S] cluster</name>
        <dbReference type="ChEBI" id="CHEBI:49883"/>
        <label>1</label>
    </ligand>
</feature>
<proteinExistence type="evidence at protein level"/>
<sequence length="65" mass="6864">MAMKIDPELCTSCGDCEPVCPTNAIAPKKGVYVINADTCTECEGEHDLPQCVNACMTDNCINPAA</sequence>